<proteinExistence type="predicted"/>
<accession>O83730</accession>
<keyword id="KW-1185">Reference proteome</keyword>
<sequence>MQDKALFSGALDTPFMQVITWARLYHKNQKRYEKIKKSFTFHETCLQSTKGIVAERILKPCVRRKVNGKFRST</sequence>
<reference key="1">
    <citation type="journal article" date="1998" name="Science">
        <title>Complete genome sequence of Treponema pallidum, the syphilis spirochete.</title>
        <authorList>
            <person name="Fraser C.M."/>
            <person name="Norris S.J."/>
            <person name="Weinstock G.M."/>
            <person name="White O."/>
            <person name="Sutton G.G."/>
            <person name="Dodson R.J."/>
            <person name="Gwinn M.L."/>
            <person name="Hickey E.K."/>
            <person name="Clayton R.A."/>
            <person name="Ketchum K.A."/>
            <person name="Sodergren E."/>
            <person name="Hardham J.M."/>
            <person name="McLeod M.P."/>
            <person name="Salzberg S.L."/>
            <person name="Peterson J.D."/>
            <person name="Khalak H.G."/>
            <person name="Richardson D.L."/>
            <person name="Howell J.K."/>
            <person name="Chidambaram M."/>
            <person name="Utterback T.R."/>
            <person name="McDonald L.A."/>
            <person name="Artiach P."/>
            <person name="Bowman C."/>
            <person name="Cotton M.D."/>
            <person name="Fujii C."/>
            <person name="Garland S.A."/>
            <person name="Hatch B."/>
            <person name="Horst K."/>
            <person name="Roberts K.M."/>
            <person name="Sandusky M."/>
            <person name="Weidman J.F."/>
            <person name="Smith H.O."/>
            <person name="Venter J.C."/>
        </authorList>
    </citation>
    <scope>NUCLEOTIDE SEQUENCE [LARGE SCALE GENOMIC DNA]</scope>
    <source>
        <strain>Nichols</strain>
    </source>
</reference>
<feature type="chain" id="PRO_0000202314" description="Uncharacterized protein TP_0749">
    <location>
        <begin position="1"/>
        <end position="73"/>
    </location>
</feature>
<dbReference type="EMBL" id="AE000520">
    <property type="protein sequence ID" value="AAC65719.1"/>
    <property type="molecule type" value="Genomic_DNA"/>
</dbReference>
<dbReference type="PIR" id="B71287">
    <property type="entry name" value="B71287"/>
</dbReference>
<dbReference type="RefSeq" id="WP_010882194.1">
    <property type="nucleotide sequence ID" value="NC_021490.2"/>
</dbReference>
<dbReference type="SMR" id="O83730"/>
<dbReference type="STRING" id="243276.TP_0749"/>
<dbReference type="EnsemblBacteria" id="AAC65719">
    <property type="protein sequence ID" value="AAC65719"/>
    <property type="gene ID" value="TP_0749"/>
</dbReference>
<dbReference type="KEGG" id="tpa:TP_0749"/>
<dbReference type="KEGG" id="tpw:TPANIC_0749"/>
<dbReference type="HOGENOM" id="CLU_2703759_0_0_12"/>
<dbReference type="Proteomes" id="UP000000811">
    <property type="component" value="Chromosome"/>
</dbReference>
<name>Y749_TREPA</name>
<protein>
    <recommendedName>
        <fullName>Uncharacterized protein TP_0749</fullName>
    </recommendedName>
</protein>
<organism>
    <name type="scientific">Treponema pallidum (strain Nichols)</name>
    <dbReference type="NCBI Taxonomy" id="243276"/>
    <lineage>
        <taxon>Bacteria</taxon>
        <taxon>Pseudomonadati</taxon>
        <taxon>Spirochaetota</taxon>
        <taxon>Spirochaetia</taxon>
        <taxon>Spirochaetales</taxon>
        <taxon>Treponemataceae</taxon>
        <taxon>Treponema</taxon>
    </lineage>
</organism>
<gene>
    <name type="ordered locus">TP_0749</name>
</gene>